<protein>
    <recommendedName>
        <fullName evidence="5">Chitin binding domain (ChtBD2) containing chtb-1</fullName>
    </recommendedName>
</protein>
<gene>
    <name evidence="5" type="primary">chtb-1</name>
    <name evidence="5" type="ORF">K04H4.2</name>
</gene>
<accession>P34504</accession>
<accession>P34505</accession>
<accession>P34506</accession>
<accession>P90907</accession>
<accession>Q6BEV9</accession>
<organism>
    <name type="scientific">Caenorhabditis elegans</name>
    <dbReference type="NCBI Taxonomy" id="6239"/>
    <lineage>
        <taxon>Eukaryota</taxon>
        <taxon>Metazoa</taxon>
        <taxon>Ecdysozoa</taxon>
        <taxon>Nematoda</taxon>
        <taxon>Chromadorea</taxon>
        <taxon>Rhabditida</taxon>
        <taxon>Rhabditina</taxon>
        <taxon>Rhabditomorpha</taxon>
        <taxon>Rhabditoidea</taxon>
        <taxon>Rhabditidae</taxon>
        <taxon>Peloderinae</taxon>
        <taxon>Caenorhabditis</taxon>
    </lineage>
</organism>
<evidence type="ECO:0000250" key="1"/>
<evidence type="ECO:0000255" key="2"/>
<evidence type="ECO:0000256" key="3">
    <source>
        <dbReference type="SAM" id="MobiDB-lite"/>
    </source>
</evidence>
<evidence type="ECO:0000305" key="4"/>
<evidence type="ECO:0000312" key="5">
    <source>
        <dbReference type="WormBase" id="K04H4.2c"/>
    </source>
</evidence>
<feature type="signal peptide" evidence="2">
    <location>
        <begin position="1"/>
        <end position="17"/>
    </location>
</feature>
<feature type="chain" id="PRO_0000014291" description="Chitin binding domain (ChtBD2) containing chtb-1">
    <location>
        <begin position="18"/>
        <end position="1463"/>
    </location>
</feature>
<feature type="domain" description="Chitin-binding type-2">
    <location>
        <begin position="94"/>
        <end position="164"/>
    </location>
</feature>
<feature type="region of interest" description="Disordered" evidence="3">
    <location>
        <begin position="70"/>
        <end position="99"/>
    </location>
</feature>
<feature type="region of interest" description="Disordered" evidence="3">
    <location>
        <begin position="720"/>
        <end position="773"/>
    </location>
</feature>
<feature type="region of interest" description="Disordered" evidence="3">
    <location>
        <begin position="841"/>
        <end position="869"/>
    </location>
</feature>
<feature type="compositionally biased region" description="Polar residues" evidence="3">
    <location>
        <begin position="722"/>
        <end position="734"/>
    </location>
</feature>
<feature type="compositionally biased region" description="Basic residues" evidence="3">
    <location>
        <begin position="740"/>
        <end position="756"/>
    </location>
</feature>
<feature type="compositionally biased region" description="Basic residues" evidence="3">
    <location>
        <begin position="843"/>
        <end position="853"/>
    </location>
</feature>
<feature type="disulfide bond" evidence="1">
    <location>
        <begin position="141"/>
        <end position="154"/>
    </location>
</feature>
<feature type="splice variant" id="VSP_012169" description="In isoform a and isoform b." evidence="4">
    <original>P</original>
    <variation>R</variation>
    <location>
        <position position="165"/>
    </location>
</feature>
<feature type="splice variant" id="VSP_012168" description="In isoform a and isoform b." evidence="4">
    <location>
        <begin position="166"/>
        <end position="679"/>
    </location>
</feature>
<feature type="splice variant" id="VSP_026510" description="In isoform a and isoform b." evidence="4">
    <original>D</original>
    <variation>V</variation>
    <location>
        <position position="721"/>
    </location>
</feature>
<feature type="splice variant" id="VSP_026511" description="In isoform a and isoform b." evidence="4">
    <location>
        <begin position="722"/>
        <end position="882"/>
    </location>
</feature>
<feature type="splice variant" id="VSP_002449" description="In isoform a." evidence="4">
    <location>
        <begin position="1281"/>
        <end position="1440"/>
    </location>
</feature>
<dbReference type="EMBL" id="Z27078">
    <property type="protein sequence ID" value="CAA81587.2"/>
    <property type="molecule type" value="Genomic_DNA"/>
</dbReference>
<dbReference type="EMBL" id="Z27078">
    <property type="protein sequence ID" value="CAA81588.3"/>
    <property type="molecule type" value="Genomic_DNA"/>
</dbReference>
<dbReference type="EMBL" id="Z27078">
    <property type="protein sequence ID" value="CAH04706.4"/>
    <property type="molecule type" value="Genomic_DNA"/>
</dbReference>
<dbReference type="PIR" id="B88553">
    <property type="entry name" value="B88553"/>
</dbReference>
<dbReference type="PIR" id="S40992">
    <property type="entry name" value="S40992"/>
</dbReference>
<dbReference type="PIR" id="S40994">
    <property type="entry name" value="S40994"/>
</dbReference>
<dbReference type="RefSeq" id="NP_001022664.4">
    <property type="nucleotide sequence ID" value="NM_001027493.5"/>
</dbReference>
<dbReference type="RefSeq" id="NP_499058.3">
    <property type="nucleotide sequence ID" value="NM_066657.5"/>
</dbReference>
<dbReference type="RefSeq" id="NP_499059.2">
    <property type="nucleotide sequence ID" value="NM_066658.4"/>
</dbReference>
<dbReference type="BioGRID" id="41513">
    <property type="interactions" value="18"/>
</dbReference>
<dbReference type="FunCoup" id="P34504">
    <property type="interactions" value="342"/>
</dbReference>
<dbReference type="IntAct" id="P34504">
    <property type="interactions" value="11"/>
</dbReference>
<dbReference type="MINT" id="P34504"/>
<dbReference type="STRING" id="6239.K04H4.2c.3"/>
<dbReference type="PaxDb" id="6239-K04H4.2c.1"/>
<dbReference type="PeptideAtlas" id="P34504"/>
<dbReference type="EnsemblMetazoa" id="K04H4.2a.1">
    <molecule id="P34504-2"/>
    <property type="protein sequence ID" value="K04H4.2a.1"/>
    <property type="gene ID" value="WBGene00010573"/>
</dbReference>
<dbReference type="EnsemblMetazoa" id="K04H4.2b.1">
    <molecule id="P34504-1"/>
    <property type="protein sequence ID" value="K04H4.2b.1"/>
    <property type="gene ID" value="WBGene00010573"/>
</dbReference>
<dbReference type="EnsemblMetazoa" id="K04H4.2c.1">
    <molecule id="P34504-3"/>
    <property type="protein sequence ID" value="K04H4.2c.1"/>
    <property type="gene ID" value="WBGene00010573"/>
</dbReference>
<dbReference type="UCSC" id="K04H4.2a.2">
    <molecule id="P34504-1"/>
    <property type="organism name" value="c. elegans"/>
</dbReference>
<dbReference type="AGR" id="WB:WBGene00010573"/>
<dbReference type="WormBase" id="K04H4.2a">
    <molecule id="P34504-2"/>
    <property type="protein sequence ID" value="CE32463"/>
    <property type="gene ID" value="WBGene00010573"/>
    <property type="gene designation" value="chtb-1"/>
</dbReference>
<dbReference type="WormBase" id="K04H4.2b">
    <molecule id="P34504-1"/>
    <property type="protein sequence ID" value="CE36653"/>
    <property type="gene ID" value="WBGene00010573"/>
    <property type="gene designation" value="chtb-1"/>
</dbReference>
<dbReference type="WormBase" id="K04H4.2c">
    <molecule id="P34504-3"/>
    <property type="protein sequence ID" value="CE47897"/>
    <property type="gene ID" value="WBGene00010573"/>
    <property type="gene designation" value="chtb-1"/>
</dbReference>
<dbReference type="eggNOG" id="KOG1217">
    <property type="taxonomic scope" value="Eukaryota"/>
</dbReference>
<dbReference type="HOGENOM" id="CLU_255206_0_0_1"/>
<dbReference type="InParanoid" id="P34504"/>
<dbReference type="OMA" id="NICCPIN"/>
<dbReference type="OrthoDB" id="5912039at2759"/>
<dbReference type="PRO" id="PR:P34504"/>
<dbReference type="Proteomes" id="UP000001940">
    <property type="component" value="Chromosome III"/>
</dbReference>
<dbReference type="Bgee" id="WBGene00010573">
    <property type="expression patterns" value="Expressed in pharyngeal muscle cell (C elegans) and 3 other cell types or tissues"/>
</dbReference>
<dbReference type="GO" id="GO:0005576">
    <property type="term" value="C:extracellular region"/>
    <property type="evidence" value="ECO:0007669"/>
    <property type="project" value="InterPro"/>
</dbReference>
<dbReference type="GO" id="GO:0008061">
    <property type="term" value="F:chitin binding"/>
    <property type="evidence" value="ECO:0007669"/>
    <property type="project" value="UniProtKB-KW"/>
</dbReference>
<dbReference type="InterPro" id="IPR007026">
    <property type="entry name" value="CC_domain"/>
</dbReference>
<dbReference type="InterPro" id="IPR002557">
    <property type="entry name" value="Chitin-bd_dom"/>
</dbReference>
<dbReference type="InterPro" id="IPR036508">
    <property type="entry name" value="Chitin-bd_dom_sf"/>
</dbReference>
<dbReference type="InterPro" id="IPR006150">
    <property type="entry name" value="Cys_repeat_1"/>
</dbReference>
<dbReference type="PANTHER" id="PTHR34150:SF4">
    <property type="entry name" value="CHITIN BINDING DOMAIN (CHTBD2) CONTAINING"/>
    <property type="match status" value="1"/>
</dbReference>
<dbReference type="PANTHER" id="PTHR34150">
    <property type="entry name" value="PROTEIN CBG08832-RELATED"/>
    <property type="match status" value="1"/>
</dbReference>
<dbReference type="Pfam" id="PF04942">
    <property type="entry name" value="CC"/>
    <property type="match status" value="2"/>
</dbReference>
<dbReference type="SMART" id="SM00494">
    <property type="entry name" value="ChtBD2"/>
    <property type="match status" value="1"/>
</dbReference>
<dbReference type="SMART" id="SM00289">
    <property type="entry name" value="WR1"/>
    <property type="match status" value="19"/>
</dbReference>
<dbReference type="SUPFAM" id="SSF57625">
    <property type="entry name" value="Invertebrate chitin-binding proteins"/>
    <property type="match status" value="1"/>
</dbReference>
<keyword id="KW-0025">Alternative splicing</keyword>
<keyword id="KW-0147">Chitin-binding</keyword>
<keyword id="KW-1015">Disulfide bond</keyword>
<keyword id="KW-1185">Reference proteome</keyword>
<keyword id="KW-0732">Signal</keyword>
<proteinExistence type="inferred from homology"/>
<name>CHTB1_CAEEL</name>
<reference key="1">
    <citation type="journal article" date="1994" name="Nature">
        <title>2.2 Mb of contiguous nucleotide sequence from chromosome III of C. elegans.</title>
        <authorList>
            <person name="Wilson R."/>
            <person name="Ainscough R."/>
            <person name="Anderson K."/>
            <person name="Baynes C."/>
            <person name="Berks M."/>
            <person name="Bonfield J."/>
            <person name="Burton J."/>
            <person name="Connell M."/>
            <person name="Copsey T."/>
            <person name="Cooper J."/>
            <person name="Coulson A."/>
            <person name="Craxton M."/>
            <person name="Dear S."/>
            <person name="Du Z."/>
            <person name="Durbin R."/>
            <person name="Favello A."/>
            <person name="Fraser A."/>
            <person name="Fulton L."/>
            <person name="Gardner A."/>
            <person name="Green P."/>
            <person name="Hawkins T."/>
            <person name="Hillier L."/>
            <person name="Jier M."/>
            <person name="Johnston L."/>
            <person name="Jones M."/>
            <person name="Kershaw J."/>
            <person name="Kirsten J."/>
            <person name="Laisster N."/>
            <person name="Latreille P."/>
            <person name="Lightning J."/>
            <person name="Lloyd C."/>
            <person name="Mortimore B."/>
            <person name="O'Callaghan M."/>
            <person name="Parsons J."/>
            <person name="Percy C."/>
            <person name="Rifken L."/>
            <person name="Roopra A."/>
            <person name="Saunders D."/>
            <person name="Shownkeen R."/>
            <person name="Sims M."/>
            <person name="Smaldon N."/>
            <person name="Smith A."/>
            <person name="Smith M."/>
            <person name="Sonnhammer E."/>
            <person name="Staden R."/>
            <person name="Sulston J."/>
            <person name="Thierry-Mieg J."/>
            <person name="Thomas K."/>
            <person name="Vaudin M."/>
            <person name="Vaughan K."/>
            <person name="Waterston R."/>
            <person name="Watson A."/>
            <person name="Weinstock L."/>
            <person name="Wilkinson-Sproat J."/>
            <person name="Wohldman P."/>
        </authorList>
    </citation>
    <scope>NUCLEOTIDE SEQUENCE [LARGE SCALE GENOMIC DNA]</scope>
    <source>
        <strain>Bristol N2</strain>
    </source>
</reference>
<reference key="2">
    <citation type="journal article" date="1998" name="Science">
        <title>Genome sequence of the nematode C. elegans: a platform for investigating biology.</title>
        <authorList>
            <consortium name="The C. elegans sequencing consortium"/>
        </authorList>
    </citation>
    <scope>NUCLEOTIDE SEQUENCE [LARGE SCALE GENOMIC DNA]</scope>
    <scope>ALTERNATIVE SPLICING</scope>
    <source>
        <strain>Bristol N2</strain>
    </source>
</reference>
<sequence>MLRNLILITLLVASGHGQTPVIGGTCKLGTADVQIGGKQTQFFLKCETTADSAEGEGVWVVKSRAAAAPSSVPSVPAENTQPQQHPKARKPASPNICEQDNGARESEVCAVSATCLQAHNDFPSSYLQCDQTTLRWVRKSCQENFLFNFEQQTCIVPKRMSSLSPSTSSPSNTENPCSKCPLGSACRNGNCIPLTTSNLCSDGSPPNNTCTRDPYSCPKGHFCTAQKVCCPSTALQSSIGCSTVCTIDESCPKGMTCQNNCCEERKLLRHPKVYRYATVEATNTIFEVDNDIFDSAAIESLPTQKPQRLDEIMAPGITPTPTRTTEPPKLRCLSSNTDEVNSLGGASSSSATCGGTNANCTSDEDCPTTFKCYQGCCKLAVCPRSLTAVKFTCKTQYHCRANEHCFFGGCCPKTIELAVIKSQVLTMSKDNEHTKETEKLIIGDCEVDTRVKKCDIDIICPEMSECVDGICCKQPPKARCGNGLMALSIPVHCSLSDDCPIASRCEYGKCCPFLSESADSTSDSVGETTPVIIKEEIISTATKVWKKVDKTSGVSINKNKCLSTQRCDLHTLCPPDFTCSLSGKCCKLNIHCPDGTVPETSCQSASNHDHCPSSSHKCTLLNKEHFACCYSPGLVVEGSVTAEVSSECPIGSVEVDPRFGTSCRYSLQCPSPYFCNQRGQQASGLVCTFSSCSNSNPCSVGTCNNGYCCSSGSNSGSAIIDSDTNSTTNPSQPETTKTKNNTKKSNSSKKHRKPKKKDVDPLSDPLLQNDFPIGPPGYGFPEHLSNLDEVLIRAQGDGVSCAGGFQSSLICSVGSECPAGLHCDTAINLCCPLLLPLTDPKNPKKRKTKRRKQKQDENEMEASANFPDSDPARFSSYSCGCMGGGSSNCVGCQNAPQIITIPQNSCPGGGYSVGGCSSGYCATGYSCIQNQCCPSYNSAPRISVYTCPSGGNAVGACMSGRCASGYTCSNNVCCPQTTTTNPFVCPDGTQAAGGCVNGQCGTGYTCSNGLCCAGTSTTVKCLDGSDAVGACIPSCTGDGCGGVQVSYYCGSGYTCTTGNICCPINSCPNGGEVLGPTINGLCPTGYTVQGNLCCSATCTDGSTGLPSVNGVCIDGYSLTNGVCCPASVTCTDEISIGPCTGTGFNGGCPAGYACDSNQVNCCPVVRYTDESCQVGPAIDGLCPPGYVVVYIPNSPLITNGVNPGTCIDLQCTTGLCLTANQIGDCDTATDAGTCPTGYTCFTNAGICCSTTTFSRLRIGNSRQMAQKPNYGRPLHSYMPPRFGGPSSSCSDGSLSSGPCMNGLCGIGLECQNGKCCSPSSNKPAGLLQSKCPSGDTAVSGCFPNGSCGTGYECVSSLNLCCPPGQPQTFPSFPGNNNGFNINNNNRFGSLSMSPRPIGARCQLDGECVGQAEGLSMCHAGVCQCSPIAYTQGIACVRRKSFQMNDDPVIDAANDDKSSSSVSV</sequence>
<comment type="alternative products">
    <event type="alternative splicing"/>
    <isoform>
        <id>P34504-3</id>
        <name>c</name>
        <sequence type="displayed"/>
    </isoform>
    <isoform>
        <id>P34504-1</id>
        <name>b</name>
        <sequence type="described" ref="VSP_012169 VSP_012168 VSP_026510 VSP_026511"/>
    </isoform>
    <isoform>
        <id>P34504-2</id>
        <name>a</name>
        <sequence type="described" ref="VSP_012169 VSP_012168 VSP_026510 VSP_026511 VSP_002449"/>
    </isoform>
</comment>